<gene>
    <name type="primary">DPP5</name>
</gene>
<comment type="function">
    <text evidence="1 4">Extracellular dipeptidyl-peptidase which removes N-terminal dipeptides sequentially from polypeptides having unsubstituted N-termini. Contributes to pathogenicity (By similarity).</text>
</comment>
<comment type="subcellular location">
    <subcellularLocation>
        <location evidence="1">Secreted</location>
    </subcellularLocation>
</comment>
<comment type="similarity">
    <text evidence="5">Belongs to the peptidase S9C family.</text>
</comment>
<name>DPP5_ARTOT</name>
<protein>
    <recommendedName>
        <fullName>Dipeptidyl-peptidase 5</fullName>
        <ecNumber>3.4.14.-</ecNumber>
    </recommendedName>
    <alternativeName>
        <fullName>Dipeptidyl-peptidase V</fullName>
        <shortName>DPP V</shortName>
        <shortName>DppV</shortName>
    </alternativeName>
</protein>
<evidence type="ECO:0000250" key="1"/>
<evidence type="ECO:0000255" key="2"/>
<evidence type="ECO:0000256" key="3">
    <source>
        <dbReference type="SAM" id="MobiDB-lite"/>
    </source>
</evidence>
<evidence type="ECO:0000269" key="4">
    <source>
    </source>
</evidence>
<evidence type="ECO:0000305" key="5"/>
<keyword id="KW-0031">Aminopeptidase</keyword>
<keyword id="KW-0325">Glycoprotein</keyword>
<keyword id="KW-0378">Hydrolase</keyword>
<keyword id="KW-0645">Protease</keyword>
<keyword id="KW-0964">Secreted</keyword>
<keyword id="KW-0720">Serine protease</keyword>
<keyword id="KW-0732">Signal</keyword>
<keyword id="KW-0843">Virulence</keyword>
<accession>A0S5W0</accession>
<organism>
    <name type="scientific">Arthroderma otae</name>
    <name type="common">Microsporum canis</name>
    <dbReference type="NCBI Taxonomy" id="63405"/>
    <lineage>
        <taxon>Eukaryota</taxon>
        <taxon>Fungi</taxon>
        <taxon>Dikarya</taxon>
        <taxon>Ascomycota</taxon>
        <taxon>Pezizomycotina</taxon>
        <taxon>Eurotiomycetes</taxon>
        <taxon>Eurotiomycetidae</taxon>
        <taxon>Onygenales</taxon>
        <taxon>Arthrodermataceae</taxon>
        <taxon>Microsporum</taxon>
    </lineage>
</organism>
<feature type="signal peptide" evidence="2">
    <location>
        <begin position="1"/>
        <end position="19"/>
    </location>
</feature>
<feature type="chain" id="PRO_5000171327" description="Dipeptidyl-peptidase 5">
    <location>
        <begin position="20"/>
        <end position="726"/>
    </location>
</feature>
<feature type="region of interest" description="Disordered" evidence="3">
    <location>
        <begin position="268"/>
        <end position="292"/>
    </location>
</feature>
<feature type="active site" description="Charge relay system" evidence="1">
    <location>
        <position position="558"/>
    </location>
</feature>
<feature type="active site" description="Charge relay system" evidence="1">
    <location>
        <position position="641"/>
    </location>
</feature>
<feature type="active site" description="Charge relay system" evidence="1">
    <location>
        <position position="673"/>
    </location>
</feature>
<feature type="glycosylation site" description="N-linked (GlcNAc...) asparagine" evidence="2">
    <location>
        <position position="96"/>
    </location>
</feature>
<feature type="glycosylation site" description="N-linked (GlcNAc...) asparagine" evidence="2">
    <location>
        <position position="252"/>
    </location>
</feature>
<feature type="glycosylation site" description="N-linked (GlcNAc...) asparagine" evidence="2">
    <location>
        <position position="485"/>
    </location>
</feature>
<feature type="glycosylation site" description="N-linked (GlcNAc...) asparagine" evidence="2">
    <location>
        <position position="605"/>
    </location>
</feature>
<feature type="glycosylation site" description="N-linked (GlcNAc...) asparagine" evidence="2">
    <location>
        <position position="699"/>
    </location>
</feature>
<proteinExistence type="inferred from homology"/>
<dbReference type="EC" id="3.4.14.-"/>
<dbReference type="EMBL" id="DQ286525">
    <property type="protein sequence ID" value="ABB89929.1"/>
    <property type="molecule type" value="Genomic_DNA"/>
</dbReference>
<dbReference type="SMR" id="A0S5W0"/>
<dbReference type="ESTHER" id="artot-dpp5">
    <property type="family name" value="Prolyl_oligopeptidase_S9"/>
</dbReference>
<dbReference type="MEROPS" id="S09.012"/>
<dbReference type="GlyCosmos" id="A0S5W0">
    <property type="glycosylation" value="5 sites, No reported glycans"/>
</dbReference>
<dbReference type="GO" id="GO:0005576">
    <property type="term" value="C:extracellular region"/>
    <property type="evidence" value="ECO:0007669"/>
    <property type="project" value="UniProtKB-SubCell"/>
</dbReference>
<dbReference type="GO" id="GO:0004177">
    <property type="term" value="F:aminopeptidase activity"/>
    <property type="evidence" value="ECO:0007669"/>
    <property type="project" value="UniProtKB-KW"/>
</dbReference>
<dbReference type="GO" id="GO:0004252">
    <property type="term" value="F:serine-type endopeptidase activity"/>
    <property type="evidence" value="ECO:0007669"/>
    <property type="project" value="TreeGrafter"/>
</dbReference>
<dbReference type="GO" id="GO:0006508">
    <property type="term" value="P:proteolysis"/>
    <property type="evidence" value="ECO:0007669"/>
    <property type="project" value="UniProtKB-KW"/>
</dbReference>
<dbReference type="FunFam" id="3.40.50.1820:FF:000028">
    <property type="entry name" value="S9 family peptidase"/>
    <property type="match status" value="1"/>
</dbReference>
<dbReference type="Gene3D" id="3.40.50.1820">
    <property type="entry name" value="alpha/beta hydrolase"/>
    <property type="match status" value="1"/>
</dbReference>
<dbReference type="Gene3D" id="2.120.10.30">
    <property type="entry name" value="TolB, C-terminal domain"/>
    <property type="match status" value="1"/>
</dbReference>
<dbReference type="InterPro" id="IPR011042">
    <property type="entry name" value="6-blade_b-propeller_TolB-like"/>
</dbReference>
<dbReference type="InterPro" id="IPR029058">
    <property type="entry name" value="AB_hydrolase_fold"/>
</dbReference>
<dbReference type="InterPro" id="IPR011659">
    <property type="entry name" value="PD40"/>
</dbReference>
<dbReference type="InterPro" id="IPR001375">
    <property type="entry name" value="Peptidase_S9_cat"/>
</dbReference>
<dbReference type="PANTHER" id="PTHR42776:SF11">
    <property type="entry name" value="DIPEPTIDYL-PEPTIDASE 5-RELATED"/>
    <property type="match status" value="1"/>
</dbReference>
<dbReference type="PANTHER" id="PTHR42776">
    <property type="entry name" value="SERINE PEPTIDASE S9 FAMILY MEMBER"/>
    <property type="match status" value="1"/>
</dbReference>
<dbReference type="Pfam" id="PF07676">
    <property type="entry name" value="PD40"/>
    <property type="match status" value="1"/>
</dbReference>
<dbReference type="Pfam" id="PF00326">
    <property type="entry name" value="Peptidase_S9"/>
    <property type="match status" value="1"/>
</dbReference>
<dbReference type="SUPFAM" id="SSF53474">
    <property type="entry name" value="alpha/beta-Hydrolases"/>
    <property type="match status" value="1"/>
</dbReference>
<dbReference type="SUPFAM" id="SSF69322">
    <property type="entry name" value="Tricorn protease domain 2"/>
    <property type="match status" value="1"/>
</dbReference>
<reference key="1">
    <citation type="journal article" date="2007" name="FEMS Microbiol. Lett.">
        <title>RNA silencing in the dermatophyte Microsporum canis.</title>
        <authorList>
            <person name="Vermout S."/>
            <person name="Tabart J."/>
            <person name="Baldo A."/>
            <person name="Monod M."/>
            <person name="Losson B."/>
            <person name="Mignon B."/>
        </authorList>
    </citation>
    <scope>NUCLEOTIDE SEQUENCE [GENOMIC DNA]</scope>
    <scope>FUNCTION</scope>
</reference>
<sequence length="726" mass="79992">MAPAKWLIASLAFASTGLAFTPEDFISAPRRGEAIPDPKGQFAVFPVSKYNFDTKDRPSGWNLLNLKTGDISVLTTDADVSEITWLGEGTNLLYVNGTDSVKGGVGIWISDAKNFGNAYKAGSIPGAFQGFKLAKSGDKINFVGYGQSTTKGDLYNEAAIEKPVSSARIYDSLFVRHWDAYVGTQFNAVFSGALTKNGNKYSFDGKLKNLVQPVKYAESPYPPFGGSGDYDLSPDGKTVAFMSKAPELPKANLTTSYIFTVPHDGSKVAEPINKRNGPRTPHGIEGASSSPVFSPDSKRIAYLQMATKNYESDRRVIHIAEVGSNKPAQRIASNWDRSPESIKWSSDGRTLYVTAEEHATGKLFTLPSDARDNHMPSAVKHDGSVSAFSFVGSSKSVLITGNSLWSNALYQIATPGRPNRKLFYANEHDPQLKGLGPNDIEPLWVDGARTKIHSWIVKPTGFDKNKVYPLAFLIHGGPQGSWGDNWSTRWNPRVWADQGYVVIAPNPTGSTGFGQKLTDDITNDWGGAPYKDLFKIWEHVRDNLKYVDTDNGIAAGASFGGFMINWIQGQELGRKFKALVSHDGTFVGSSKIGTDELFFIEHDFNGTFFEARQNYDRWDCSKPEYVAKWSTPQLVVHSDYDFRLSVAEGVGLFNVLQEKGVPSRLLNFPDESHCVTKPENSLVWHQQVLGWINKFSGINKSNPKAIKLSDCKVEVIDHEAGSYFDY</sequence>